<gene>
    <name evidence="1" type="primary">pyrG</name>
    <name type="ordered locus">CE1551</name>
</gene>
<evidence type="ECO:0000255" key="1">
    <source>
        <dbReference type="HAMAP-Rule" id="MF_01227"/>
    </source>
</evidence>
<feature type="chain" id="PRO_0000266099" description="CTP synthase">
    <location>
        <begin position="1"/>
        <end position="559"/>
    </location>
</feature>
<feature type="domain" description="Glutamine amidotransferase type-1" evidence="1">
    <location>
        <begin position="308"/>
        <end position="557"/>
    </location>
</feature>
<feature type="region of interest" description="Amidoligase domain" evidence="1">
    <location>
        <begin position="1"/>
        <end position="283"/>
    </location>
</feature>
<feature type="active site" description="Nucleophile; for glutamine hydrolysis" evidence="1">
    <location>
        <position position="398"/>
    </location>
</feature>
<feature type="active site" evidence="1">
    <location>
        <position position="530"/>
    </location>
</feature>
<feature type="active site" evidence="1">
    <location>
        <position position="532"/>
    </location>
</feature>
<feature type="binding site" evidence="1">
    <location>
        <position position="25"/>
    </location>
    <ligand>
        <name>CTP</name>
        <dbReference type="ChEBI" id="CHEBI:37563"/>
        <note>allosteric inhibitor</note>
    </ligand>
</feature>
<feature type="binding site" evidence="1">
    <location>
        <position position="25"/>
    </location>
    <ligand>
        <name>UTP</name>
        <dbReference type="ChEBI" id="CHEBI:46398"/>
    </ligand>
</feature>
<feature type="binding site" evidence="1">
    <location>
        <begin position="26"/>
        <end position="31"/>
    </location>
    <ligand>
        <name>ATP</name>
        <dbReference type="ChEBI" id="CHEBI:30616"/>
    </ligand>
</feature>
<feature type="binding site" evidence="1">
    <location>
        <position position="83"/>
    </location>
    <ligand>
        <name>ATP</name>
        <dbReference type="ChEBI" id="CHEBI:30616"/>
    </ligand>
</feature>
<feature type="binding site" evidence="1">
    <location>
        <position position="83"/>
    </location>
    <ligand>
        <name>Mg(2+)</name>
        <dbReference type="ChEBI" id="CHEBI:18420"/>
    </ligand>
</feature>
<feature type="binding site" evidence="1">
    <location>
        <position position="157"/>
    </location>
    <ligand>
        <name>Mg(2+)</name>
        <dbReference type="ChEBI" id="CHEBI:18420"/>
    </ligand>
</feature>
<feature type="binding site" evidence="1">
    <location>
        <begin position="164"/>
        <end position="166"/>
    </location>
    <ligand>
        <name>CTP</name>
        <dbReference type="ChEBI" id="CHEBI:37563"/>
        <note>allosteric inhibitor</note>
    </ligand>
</feature>
<feature type="binding site" evidence="1">
    <location>
        <begin position="204"/>
        <end position="209"/>
    </location>
    <ligand>
        <name>CTP</name>
        <dbReference type="ChEBI" id="CHEBI:37563"/>
        <note>allosteric inhibitor</note>
    </ligand>
</feature>
<feature type="binding site" evidence="1">
    <location>
        <begin position="204"/>
        <end position="209"/>
    </location>
    <ligand>
        <name>UTP</name>
        <dbReference type="ChEBI" id="CHEBI:46398"/>
    </ligand>
</feature>
<feature type="binding site" evidence="1">
    <location>
        <position position="240"/>
    </location>
    <ligand>
        <name>CTP</name>
        <dbReference type="ChEBI" id="CHEBI:37563"/>
        <note>allosteric inhibitor</note>
    </ligand>
</feature>
<feature type="binding site" evidence="1">
    <location>
        <position position="240"/>
    </location>
    <ligand>
        <name>UTP</name>
        <dbReference type="ChEBI" id="CHEBI:46398"/>
    </ligand>
</feature>
<feature type="binding site" evidence="1">
    <location>
        <position position="371"/>
    </location>
    <ligand>
        <name>L-glutamine</name>
        <dbReference type="ChEBI" id="CHEBI:58359"/>
    </ligand>
</feature>
<feature type="binding site" evidence="1">
    <location>
        <begin position="399"/>
        <end position="402"/>
    </location>
    <ligand>
        <name>L-glutamine</name>
        <dbReference type="ChEBI" id="CHEBI:58359"/>
    </ligand>
</feature>
<feature type="binding site" evidence="1">
    <location>
        <position position="421"/>
    </location>
    <ligand>
        <name>L-glutamine</name>
        <dbReference type="ChEBI" id="CHEBI:58359"/>
    </ligand>
</feature>
<feature type="binding site" evidence="1">
    <location>
        <position position="482"/>
    </location>
    <ligand>
        <name>L-glutamine</name>
        <dbReference type="ChEBI" id="CHEBI:58359"/>
    </ligand>
</feature>
<protein>
    <recommendedName>
        <fullName evidence="1">CTP synthase</fullName>
        <ecNumber evidence="1">6.3.4.2</ecNumber>
    </recommendedName>
    <alternativeName>
        <fullName evidence="1">Cytidine 5'-triphosphate synthase</fullName>
    </alternativeName>
    <alternativeName>
        <fullName evidence="1">Cytidine triphosphate synthetase</fullName>
        <shortName evidence="1">CTP synthetase</shortName>
        <shortName evidence="1">CTPS</shortName>
    </alternativeName>
    <alternativeName>
        <fullName evidence="1">UTP--ammonia ligase</fullName>
    </alternativeName>
</protein>
<dbReference type="EC" id="6.3.4.2" evidence="1"/>
<dbReference type="EMBL" id="BA000035">
    <property type="protein sequence ID" value="BAC18361.1"/>
    <property type="molecule type" value="Genomic_DNA"/>
</dbReference>
<dbReference type="RefSeq" id="WP_006767549.1">
    <property type="nucleotide sequence ID" value="NC_004369.1"/>
</dbReference>
<dbReference type="SMR" id="Q8FTL2"/>
<dbReference type="STRING" id="196164.gene:10741969"/>
<dbReference type="KEGG" id="cef:CE1551"/>
<dbReference type="eggNOG" id="COG0504">
    <property type="taxonomic scope" value="Bacteria"/>
</dbReference>
<dbReference type="HOGENOM" id="CLU_011675_5_0_11"/>
<dbReference type="OrthoDB" id="9801107at2"/>
<dbReference type="UniPathway" id="UPA00159">
    <property type="reaction ID" value="UER00277"/>
</dbReference>
<dbReference type="Proteomes" id="UP000001409">
    <property type="component" value="Chromosome"/>
</dbReference>
<dbReference type="GO" id="GO:0005829">
    <property type="term" value="C:cytosol"/>
    <property type="evidence" value="ECO:0007669"/>
    <property type="project" value="TreeGrafter"/>
</dbReference>
<dbReference type="GO" id="GO:0005524">
    <property type="term" value="F:ATP binding"/>
    <property type="evidence" value="ECO:0007669"/>
    <property type="project" value="UniProtKB-KW"/>
</dbReference>
<dbReference type="GO" id="GO:0003883">
    <property type="term" value="F:CTP synthase activity"/>
    <property type="evidence" value="ECO:0007669"/>
    <property type="project" value="UniProtKB-UniRule"/>
</dbReference>
<dbReference type="GO" id="GO:0004359">
    <property type="term" value="F:glutaminase activity"/>
    <property type="evidence" value="ECO:0007669"/>
    <property type="project" value="RHEA"/>
</dbReference>
<dbReference type="GO" id="GO:0042802">
    <property type="term" value="F:identical protein binding"/>
    <property type="evidence" value="ECO:0007669"/>
    <property type="project" value="TreeGrafter"/>
</dbReference>
<dbReference type="GO" id="GO:0046872">
    <property type="term" value="F:metal ion binding"/>
    <property type="evidence" value="ECO:0007669"/>
    <property type="project" value="UniProtKB-KW"/>
</dbReference>
<dbReference type="GO" id="GO:0044210">
    <property type="term" value="P:'de novo' CTP biosynthetic process"/>
    <property type="evidence" value="ECO:0007669"/>
    <property type="project" value="UniProtKB-UniRule"/>
</dbReference>
<dbReference type="GO" id="GO:0019856">
    <property type="term" value="P:pyrimidine nucleobase biosynthetic process"/>
    <property type="evidence" value="ECO:0007669"/>
    <property type="project" value="TreeGrafter"/>
</dbReference>
<dbReference type="CDD" id="cd03113">
    <property type="entry name" value="CTPS_N"/>
    <property type="match status" value="1"/>
</dbReference>
<dbReference type="CDD" id="cd01746">
    <property type="entry name" value="GATase1_CTP_Synthase"/>
    <property type="match status" value="1"/>
</dbReference>
<dbReference type="FunFam" id="3.40.50.300:FF:000009">
    <property type="entry name" value="CTP synthase"/>
    <property type="match status" value="1"/>
</dbReference>
<dbReference type="FunFam" id="3.40.50.880:FF:000002">
    <property type="entry name" value="CTP synthase"/>
    <property type="match status" value="1"/>
</dbReference>
<dbReference type="Gene3D" id="3.40.50.880">
    <property type="match status" value="1"/>
</dbReference>
<dbReference type="Gene3D" id="3.40.50.300">
    <property type="entry name" value="P-loop containing nucleotide triphosphate hydrolases"/>
    <property type="match status" value="1"/>
</dbReference>
<dbReference type="HAMAP" id="MF_01227">
    <property type="entry name" value="PyrG"/>
    <property type="match status" value="1"/>
</dbReference>
<dbReference type="InterPro" id="IPR029062">
    <property type="entry name" value="Class_I_gatase-like"/>
</dbReference>
<dbReference type="InterPro" id="IPR004468">
    <property type="entry name" value="CTP_synthase"/>
</dbReference>
<dbReference type="InterPro" id="IPR017456">
    <property type="entry name" value="CTP_synthase_N"/>
</dbReference>
<dbReference type="InterPro" id="IPR017926">
    <property type="entry name" value="GATASE"/>
</dbReference>
<dbReference type="InterPro" id="IPR033828">
    <property type="entry name" value="GATase1_CTP_Synthase"/>
</dbReference>
<dbReference type="InterPro" id="IPR027417">
    <property type="entry name" value="P-loop_NTPase"/>
</dbReference>
<dbReference type="NCBIfam" id="NF003792">
    <property type="entry name" value="PRK05380.1"/>
    <property type="match status" value="1"/>
</dbReference>
<dbReference type="NCBIfam" id="TIGR00337">
    <property type="entry name" value="PyrG"/>
    <property type="match status" value="1"/>
</dbReference>
<dbReference type="PANTHER" id="PTHR11550">
    <property type="entry name" value="CTP SYNTHASE"/>
    <property type="match status" value="1"/>
</dbReference>
<dbReference type="PANTHER" id="PTHR11550:SF0">
    <property type="entry name" value="CTP SYNTHASE-RELATED"/>
    <property type="match status" value="1"/>
</dbReference>
<dbReference type="Pfam" id="PF06418">
    <property type="entry name" value="CTP_synth_N"/>
    <property type="match status" value="1"/>
</dbReference>
<dbReference type="Pfam" id="PF00117">
    <property type="entry name" value="GATase"/>
    <property type="match status" value="1"/>
</dbReference>
<dbReference type="SUPFAM" id="SSF52317">
    <property type="entry name" value="Class I glutamine amidotransferase-like"/>
    <property type="match status" value="1"/>
</dbReference>
<dbReference type="SUPFAM" id="SSF52540">
    <property type="entry name" value="P-loop containing nucleoside triphosphate hydrolases"/>
    <property type="match status" value="1"/>
</dbReference>
<dbReference type="PROSITE" id="PS51273">
    <property type="entry name" value="GATASE_TYPE_1"/>
    <property type="match status" value="1"/>
</dbReference>
<keyword id="KW-0067">ATP-binding</keyword>
<keyword id="KW-0315">Glutamine amidotransferase</keyword>
<keyword id="KW-0436">Ligase</keyword>
<keyword id="KW-0460">Magnesium</keyword>
<keyword id="KW-0479">Metal-binding</keyword>
<keyword id="KW-0547">Nucleotide-binding</keyword>
<keyword id="KW-0665">Pyrimidine biosynthesis</keyword>
<keyword id="KW-1185">Reference proteome</keyword>
<sequence length="559" mass="60688">MSTSRTTTNNKRHTKHVFVTGGVVSSLGKGLTAASLGQLLIARGLNVTMQKLDPYLNVDPGTMNPFEHGEVFVTEDGAETDLDLGHYERFLNRNLTANANVTTGKVYSTVIARERRGGYLGRTVQVIPHITDEIKARILAMGDPDEHGVVPDVVISEVGGTVGDIESQPFLEAARQVRQEIGRENCFFIHCSLVPYLATSGELKTKPTQHSVAELRSIGILPDALVLRCDREVPEALKTKIALMCDVDTDGVVSCPDSESIYTIPETLYHEHLDTFLIRRLDLPFRDVDWTGWRDLLDRVHHPEREITVGIVGKYVDLPDAYLSVVEAIRAAGYAHRTRTRITWITSDDCTTPAGAATALGGVDALVIPGGFGARGIEGKIAAVTYAREHRIPLLGLCLGLQCVVIEAARQAGLEQATSTEFDPGAAQPVISTMAEQQAAVSGQADLGGTMRLGSYPATLEQGSLVAQLYGITEVSERHRHRYEVNNAYRTQIGQRSPLIFSGTSPDGHLVEFVEYDRAVHPFLVATQAHPEYKSRPTQAHPLFSGLVAAALAAAVTDA</sequence>
<name>PYRG_COREF</name>
<proteinExistence type="inferred from homology"/>
<accession>Q8FTL2</accession>
<reference key="1">
    <citation type="journal article" date="2003" name="Genome Res.">
        <title>Comparative complete genome sequence analysis of the amino acid replacements responsible for the thermostability of Corynebacterium efficiens.</title>
        <authorList>
            <person name="Nishio Y."/>
            <person name="Nakamura Y."/>
            <person name="Kawarabayasi Y."/>
            <person name="Usuda Y."/>
            <person name="Kimura E."/>
            <person name="Sugimoto S."/>
            <person name="Matsui K."/>
            <person name="Yamagishi A."/>
            <person name="Kikuchi H."/>
            <person name="Ikeo K."/>
            <person name="Gojobori T."/>
        </authorList>
    </citation>
    <scope>NUCLEOTIDE SEQUENCE [LARGE SCALE GENOMIC DNA]</scope>
    <source>
        <strain>DSM 44549 / YS-314 / AJ 12310 / JCM 11189 / NBRC 100395</strain>
    </source>
</reference>
<comment type="function">
    <text evidence="1">Catalyzes the ATP-dependent amination of UTP to CTP with either L-glutamine or ammonia as the source of nitrogen. Regulates intracellular CTP levels through interactions with the four ribonucleotide triphosphates.</text>
</comment>
<comment type="catalytic activity">
    <reaction evidence="1">
        <text>UTP + L-glutamine + ATP + H2O = CTP + L-glutamate + ADP + phosphate + 2 H(+)</text>
        <dbReference type="Rhea" id="RHEA:26426"/>
        <dbReference type="ChEBI" id="CHEBI:15377"/>
        <dbReference type="ChEBI" id="CHEBI:15378"/>
        <dbReference type="ChEBI" id="CHEBI:29985"/>
        <dbReference type="ChEBI" id="CHEBI:30616"/>
        <dbReference type="ChEBI" id="CHEBI:37563"/>
        <dbReference type="ChEBI" id="CHEBI:43474"/>
        <dbReference type="ChEBI" id="CHEBI:46398"/>
        <dbReference type="ChEBI" id="CHEBI:58359"/>
        <dbReference type="ChEBI" id="CHEBI:456216"/>
        <dbReference type="EC" id="6.3.4.2"/>
    </reaction>
</comment>
<comment type="catalytic activity">
    <reaction evidence="1">
        <text>L-glutamine + H2O = L-glutamate + NH4(+)</text>
        <dbReference type="Rhea" id="RHEA:15889"/>
        <dbReference type="ChEBI" id="CHEBI:15377"/>
        <dbReference type="ChEBI" id="CHEBI:28938"/>
        <dbReference type="ChEBI" id="CHEBI:29985"/>
        <dbReference type="ChEBI" id="CHEBI:58359"/>
    </reaction>
</comment>
<comment type="catalytic activity">
    <reaction evidence="1">
        <text>UTP + NH4(+) + ATP = CTP + ADP + phosphate + 2 H(+)</text>
        <dbReference type="Rhea" id="RHEA:16597"/>
        <dbReference type="ChEBI" id="CHEBI:15378"/>
        <dbReference type="ChEBI" id="CHEBI:28938"/>
        <dbReference type="ChEBI" id="CHEBI:30616"/>
        <dbReference type="ChEBI" id="CHEBI:37563"/>
        <dbReference type="ChEBI" id="CHEBI:43474"/>
        <dbReference type="ChEBI" id="CHEBI:46398"/>
        <dbReference type="ChEBI" id="CHEBI:456216"/>
    </reaction>
</comment>
<comment type="activity regulation">
    <text evidence="1">Allosterically activated by GTP, when glutamine is the substrate; GTP has no effect on the reaction when ammonia is the substrate. The allosteric effector GTP functions by stabilizing the protein conformation that binds the tetrahedral intermediate(s) formed during glutamine hydrolysis. Inhibited by the product CTP, via allosteric rather than competitive inhibition.</text>
</comment>
<comment type="pathway">
    <text evidence="1">Pyrimidine metabolism; CTP biosynthesis via de novo pathway; CTP from UDP: step 2/2.</text>
</comment>
<comment type="subunit">
    <text evidence="1">Homotetramer.</text>
</comment>
<comment type="miscellaneous">
    <text evidence="1">CTPSs have evolved a hybrid strategy for distinguishing between UTP and CTP. The overlapping regions of the product feedback inhibitory and substrate sites recognize a common feature in both compounds, the triphosphate moiety. To differentiate isosteric substrate and product pyrimidine rings, an additional pocket far from the expected kinase/ligase catalytic site, specifically recognizes the cytosine and ribose portions of the product inhibitor.</text>
</comment>
<comment type="similarity">
    <text evidence="1">Belongs to the CTP synthase family.</text>
</comment>
<organism>
    <name type="scientific">Corynebacterium efficiens (strain DSM 44549 / YS-314 / AJ 12310 / JCM 11189 / NBRC 100395)</name>
    <dbReference type="NCBI Taxonomy" id="196164"/>
    <lineage>
        <taxon>Bacteria</taxon>
        <taxon>Bacillati</taxon>
        <taxon>Actinomycetota</taxon>
        <taxon>Actinomycetes</taxon>
        <taxon>Mycobacteriales</taxon>
        <taxon>Corynebacteriaceae</taxon>
        <taxon>Corynebacterium</taxon>
    </lineage>
</organism>